<feature type="chain" id="PRO_0000448139" description="Intermediate transcription factor 3 large subunit">
    <location>
        <begin position="1"/>
        <end position="382"/>
    </location>
</feature>
<feature type="sequence variant" description="In strain: Garcia-1966.">
    <original>S</original>
    <variation>L</variation>
    <location>
        <position position="43"/>
    </location>
</feature>
<organismHost>
    <name type="scientific">Homo sapiens</name>
    <name type="common">Human</name>
    <dbReference type="NCBI Taxonomy" id="9606"/>
</organismHost>
<name>VITF3_VARV</name>
<gene>
    <name type="primary">OPG150</name>
    <name type="synonym">VITF3L</name>
    <name type="ORF">A23R</name>
    <name type="ORF">A24R</name>
</gene>
<keyword id="KW-0010">Activator</keyword>
<keyword id="KW-0244">Early protein</keyword>
<keyword id="KW-0597">Phosphoprotein</keyword>
<keyword id="KW-0804">Transcription</keyword>
<keyword id="KW-0805">Transcription regulation</keyword>
<dbReference type="EMBL" id="L22579">
    <property type="protein sequence ID" value="AAA60875.1"/>
    <property type="molecule type" value="Genomic_DNA"/>
</dbReference>
<dbReference type="EMBL" id="X76268">
    <property type="protein sequence ID" value="CAA53896.1"/>
    <property type="molecule type" value="Genomic_DNA"/>
</dbReference>
<dbReference type="EMBL" id="Y16780">
    <property type="protein sequence ID" value="CAB54727.1"/>
    <property type="molecule type" value="Genomic_DNA"/>
</dbReference>
<dbReference type="PIR" id="E72166">
    <property type="entry name" value="E72166"/>
</dbReference>
<dbReference type="PIR" id="T28565">
    <property type="entry name" value="T28565"/>
</dbReference>
<dbReference type="RefSeq" id="NP_042171.1">
    <property type="nucleotide sequence ID" value="NC_001611.1"/>
</dbReference>
<dbReference type="SMR" id="P0DSS0"/>
<dbReference type="GeneID" id="1486499"/>
<dbReference type="KEGG" id="vg:1486499"/>
<dbReference type="Proteomes" id="UP000111493">
    <property type="component" value="Segment"/>
</dbReference>
<dbReference type="Proteomes" id="UP000119805">
    <property type="component" value="Segment"/>
</dbReference>
<dbReference type="InterPro" id="IPR008789">
    <property type="entry name" value="Poxvirus_intermed-TF"/>
</dbReference>
<dbReference type="Pfam" id="PF05718">
    <property type="entry name" value="Pox_int_trans"/>
    <property type="match status" value="1"/>
</dbReference>
<accession>P0DSS0</accession>
<accession>P33846</accession>
<accession>Q76PX8</accession>
<accession>Q89168</accession>
<sequence length="382" mass="44612">MDNLFTFLHEIEDRYTRTIFNFHLISCDEIGDIYGLMKERISSEDMFDNIVYNKDIHPAIKKLVYCDIQLTKHIINQNTYPVFNDSSQVKCCHYFDINSDNSNISSRTVEIFEREKSSLVSYIKTTNKKRKVNYGEIKKTVHGGTNANYFSGKKSDEYLSTTVRSNINQPWIKTISKRMRVNIINHSIVTRGKSSILQTIEIIFTNRTCVKIFKDSTMHIILSKDKDEKGCIHMIDKLFYVYYNLFLLFEDIIQNEYFKEVANVVNHVLTATALDEKLFLIKKMAKHDVYGVSNFKIGMFNLTFIKSLDHTVFPSLLDEDSKIKFFKGKKLNIVALRSLEDCINYVTKSENMIEMMKERSTILNSIDIETESVDRLKDLLLK</sequence>
<proteinExistence type="evidence at transcript level"/>
<organism>
    <name type="scientific">Variola virus</name>
    <dbReference type="NCBI Taxonomy" id="10255"/>
    <lineage>
        <taxon>Viruses</taxon>
        <taxon>Varidnaviria</taxon>
        <taxon>Bamfordvirae</taxon>
        <taxon>Nucleocytoviricota</taxon>
        <taxon>Pokkesviricetes</taxon>
        <taxon>Chitovirales</taxon>
        <taxon>Poxviridae</taxon>
        <taxon>Chordopoxvirinae</taxon>
        <taxon>Orthopoxvirus</taxon>
    </lineage>
</organism>
<protein>
    <recommendedName>
        <fullName>Intermediate transcription factor 3 large subunit</fullName>
    </recommendedName>
    <alternativeName>
        <fullName>VITF-3 45 kDa subunit</fullName>
    </alternativeName>
</protein>
<comment type="function">
    <text evidence="1">Acts with RNA polymerase to initiate transcription from intermediate gene promoters.</text>
</comment>
<comment type="subunit">
    <text evidence="1">Heterodimerizes with protein A8 to form the virus intermediate transcription factor (VITF)-3.</text>
</comment>
<comment type="induction">
    <text>Expressed in the early phase of the viral replicative cycle.</text>
</comment>
<comment type="similarity">
    <text evidence="2">Belongs to the orthopoxvirus OPG150 family.</text>
</comment>
<evidence type="ECO:0000250" key="1">
    <source>
        <dbReference type="UniProtKB" id="Q80HV2"/>
    </source>
</evidence>
<evidence type="ECO:0000305" key="2"/>
<reference key="1">
    <citation type="journal article" date="1993" name="Nature">
        <title>Potential virulence determinants in terminal regions of variola smallpox virus genome.</title>
        <authorList>
            <person name="Massung R.F."/>
            <person name="Esposito J.J."/>
            <person name="Liu L.I."/>
            <person name="Qi J."/>
            <person name="Utterback T.R."/>
            <person name="Knight J.C."/>
            <person name="Aubin L."/>
            <person name="Yuran T.E."/>
            <person name="Parsons J.M."/>
            <person name="Loparev V.N."/>
            <person name="Selivanov N.A."/>
            <person name="Cavallaro K.F."/>
            <person name="Kerlavage A.R."/>
            <person name="Mahy B.W.J."/>
            <person name="Venter J.C."/>
        </authorList>
    </citation>
    <scope>NUCLEOTIDE SEQUENCE [GENOMIC DNA]</scope>
    <source>
        <strain>Bangladesh-1975</strain>
    </source>
</reference>
<reference key="2">
    <citation type="submission" date="1993-11" db="EMBL/GenBank/DDBJ databases">
        <title>XhoI-D DNA fragment of Variola minor virus strain Garcia-1966.</title>
        <authorList>
            <person name="Shchelkunov S.N."/>
            <person name="Totmenin A.V."/>
            <person name="Sosnovtsev S.V."/>
            <person name="Safronov P.F."/>
            <person name="Resenchuk S.M."/>
            <person name="Blinov V.M."/>
            <person name="Sandakhchiev L.S."/>
        </authorList>
    </citation>
    <scope>NUCLEOTIDE SEQUENCE [GENOMIC DNA]</scope>
    <source>
        <strain>Garcia-1966</strain>
    </source>
</reference>
<reference key="3">
    <citation type="journal article" date="2000" name="Virology">
        <title>Alastrim smallpox variola minor virus genome DNA sequences.</title>
        <authorList>
            <person name="Shchelkunov S.N."/>
            <person name="Totmenin A.V."/>
            <person name="Loparev V.N."/>
            <person name="Safronov P.F."/>
            <person name="Gutorov V.V."/>
            <person name="Chizhikov V.E."/>
            <person name="Knight J.C."/>
            <person name="Parsons J.M."/>
            <person name="Massung R.F."/>
            <person name="Esposito J.J."/>
        </authorList>
    </citation>
    <scope>NUCLEOTIDE SEQUENCE [LARGE SCALE GENOMIC DNA]</scope>
    <source>
        <strain>Garcia-1966</strain>
    </source>
</reference>